<gene>
    <name type="primary">flr</name>
    <name type="ordered locus">SAV1156</name>
</gene>
<protein>
    <recommendedName>
        <fullName>FPRL1 inhibitory protein</fullName>
        <shortName>FLIPr</shortName>
    </recommendedName>
</protein>
<proteinExistence type="inferred from homology"/>
<name>FLIPR_STAAM</name>
<dbReference type="EMBL" id="BA000017">
    <property type="protein sequence ID" value="BAB57318.1"/>
    <property type="molecule type" value="Genomic_DNA"/>
</dbReference>
<dbReference type="RefSeq" id="WP_000739564.1">
    <property type="nucleotide sequence ID" value="NC_002758.2"/>
</dbReference>
<dbReference type="DNASU" id="1121132"/>
<dbReference type="KEGG" id="sav:SAV1156"/>
<dbReference type="HOGENOM" id="CLU_157996_0_0_9"/>
<dbReference type="Proteomes" id="UP000002481">
    <property type="component" value="Chromosome"/>
</dbReference>
<dbReference type="GO" id="GO:0005576">
    <property type="term" value="C:extracellular region"/>
    <property type="evidence" value="ECO:0007669"/>
    <property type="project" value="UniProtKB-SubCell"/>
</dbReference>
<dbReference type="Gene3D" id="3.10.20.390">
    <property type="entry name" value="Chemotaxis-inhibiting protein CHIPS"/>
    <property type="match status" value="1"/>
</dbReference>
<dbReference type="InterPro" id="IPR023256">
    <property type="entry name" value="FLIPR"/>
</dbReference>
<dbReference type="InterPro" id="IPR038529">
    <property type="entry name" value="FLIPR/CHIP_sf"/>
</dbReference>
<dbReference type="InterPro" id="IPR023253">
    <property type="entry name" value="FLIPR/CHIPS"/>
</dbReference>
<dbReference type="NCBIfam" id="NF009592">
    <property type="entry name" value="PRK13033.1"/>
    <property type="match status" value="1"/>
</dbReference>
<dbReference type="Pfam" id="PF16104">
    <property type="entry name" value="FPRL1_inhibitor"/>
    <property type="match status" value="1"/>
</dbReference>
<dbReference type="PRINTS" id="PR02037">
    <property type="entry name" value="FLIPR"/>
</dbReference>
<dbReference type="PRINTS" id="PR02035">
    <property type="entry name" value="FLIPRCHIPS"/>
</dbReference>
<keyword id="KW-0964">Secreted</keyword>
<keyword id="KW-0732">Signal</keyword>
<keyword id="KW-0843">Virulence</keyword>
<evidence type="ECO:0000250" key="1"/>
<evidence type="ECO:0000255" key="2"/>
<evidence type="ECO:0000305" key="3"/>
<comment type="function">
    <text evidence="1">May be involved in countering the first line of host defense mechanisms. Impairs the leukocyte response to FPRL1 agonists by binding directly to host FPRL1 (By similarity).</text>
</comment>
<comment type="subcellular location">
    <subcellularLocation>
        <location evidence="1">Secreted</location>
    </subcellularLocation>
</comment>
<comment type="similarity">
    <text evidence="3">Belongs to the CHIPS/FLIPr family.</text>
</comment>
<accession>Q99UV1</accession>
<sequence>MKKNITKTIIASTVIAAGLLTQTNDAKAFFSYEWKGLEIAKNLADQAKKDDERIDKLMKESDKNLTPYKAETVNDLYLIVKKLSQGDVKKAVVRIKDGGPRDYYTFDLTRPLEENRKNIKVVKNGEIDSIYWD</sequence>
<feature type="signal peptide" evidence="2">
    <location>
        <begin position="1"/>
        <end position="28"/>
    </location>
</feature>
<feature type="chain" id="PRO_0000286684" description="FPRL1 inhibitory protein">
    <location>
        <begin position="29"/>
        <end position="133"/>
    </location>
</feature>
<organism>
    <name type="scientific">Staphylococcus aureus (strain Mu50 / ATCC 700699)</name>
    <dbReference type="NCBI Taxonomy" id="158878"/>
    <lineage>
        <taxon>Bacteria</taxon>
        <taxon>Bacillati</taxon>
        <taxon>Bacillota</taxon>
        <taxon>Bacilli</taxon>
        <taxon>Bacillales</taxon>
        <taxon>Staphylococcaceae</taxon>
        <taxon>Staphylococcus</taxon>
    </lineage>
</organism>
<reference key="1">
    <citation type="journal article" date="2001" name="Lancet">
        <title>Whole genome sequencing of meticillin-resistant Staphylococcus aureus.</title>
        <authorList>
            <person name="Kuroda M."/>
            <person name="Ohta T."/>
            <person name="Uchiyama I."/>
            <person name="Baba T."/>
            <person name="Yuzawa H."/>
            <person name="Kobayashi I."/>
            <person name="Cui L."/>
            <person name="Oguchi A."/>
            <person name="Aoki K."/>
            <person name="Nagai Y."/>
            <person name="Lian J.-Q."/>
            <person name="Ito T."/>
            <person name="Kanamori M."/>
            <person name="Matsumaru H."/>
            <person name="Maruyama A."/>
            <person name="Murakami H."/>
            <person name="Hosoyama A."/>
            <person name="Mizutani-Ui Y."/>
            <person name="Takahashi N.K."/>
            <person name="Sawano T."/>
            <person name="Inoue R."/>
            <person name="Kaito C."/>
            <person name="Sekimizu K."/>
            <person name="Hirakawa H."/>
            <person name="Kuhara S."/>
            <person name="Goto S."/>
            <person name="Yabuzaki J."/>
            <person name="Kanehisa M."/>
            <person name="Yamashita A."/>
            <person name="Oshima K."/>
            <person name="Furuya K."/>
            <person name="Yoshino C."/>
            <person name="Shiba T."/>
            <person name="Hattori M."/>
            <person name="Ogasawara N."/>
            <person name="Hayashi H."/>
            <person name="Hiramatsu K."/>
        </authorList>
    </citation>
    <scope>NUCLEOTIDE SEQUENCE [LARGE SCALE GENOMIC DNA]</scope>
    <source>
        <strain>Mu50 / ATCC 700699</strain>
    </source>
</reference>